<evidence type="ECO:0000255" key="1">
    <source>
        <dbReference type="PROSITE-ProRule" id="PRU00253"/>
    </source>
</evidence>
<evidence type="ECO:0000269" key="2">
    <source>
    </source>
</evidence>
<evidence type="ECO:0000305" key="3"/>
<reference key="1">
    <citation type="journal article" date="1999" name="Mol. Microbiol.">
        <title>Characterization of a sugar-binding protein from Azospirillum brasilense mediating chemotaxis to and uptake of sugars.</title>
        <authorList>
            <person name="Van Bastelaere E."/>
            <person name="Lambrecht M."/>
            <person name="Vermeiren H."/>
            <person name="Van Dommelen A."/>
            <person name="Keijers V."/>
            <person name="Proost P."/>
            <person name="Vanderleyden J."/>
        </authorList>
    </citation>
    <scope>NUCLEOTIDE SEQUENCE [GENOMIC DNA]</scope>
    <scope>FUNCTION AS A REGULATOR</scope>
    <source>
        <strain>ATCC 29145 / DSM 1690 / IMET 11303 / Sp7</strain>
    </source>
</reference>
<comment type="function">
    <text evidence="2">Does not seem to be required for sbpA expression.</text>
</comment>
<comment type="similarity">
    <text evidence="3">Belongs to the LysR transcriptional regulatory family.</text>
</comment>
<feature type="chain" id="PRO_0000105624" description="HTH-type transcriptional regulator GbpR">
    <location>
        <begin position="1"/>
        <end position="342"/>
    </location>
</feature>
<feature type="domain" description="HTH lysR-type" evidence="1">
    <location>
        <begin position="16"/>
        <end position="73"/>
    </location>
</feature>
<feature type="DNA-binding region" description="H-T-H motif" evidence="1">
    <location>
        <begin position="33"/>
        <end position="52"/>
    </location>
</feature>
<keyword id="KW-0238">DNA-binding</keyword>
<keyword id="KW-0804">Transcription</keyword>
<keyword id="KW-0805">Transcription regulation</keyword>
<name>GBPR_AZOBR</name>
<dbReference type="EMBL" id="U40823">
    <property type="protein sequence ID" value="AAA86620.1"/>
    <property type="molecule type" value="Genomic_DNA"/>
</dbReference>
<dbReference type="RefSeq" id="WP_059399696.1">
    <property type="nucleotide sequence ID" value="NZ_CP012917.1"/>
</dbReference>
<dbReference type="SMR" id="P52661"/>
<dbReference type="GeneID" id="56453550"/>
<dbReference type="KEGG" id="abf:AMK58_27395"/>
<dbReference type="GO" id="GO:0005829">
    <property type="term" value="C:cytosol"/>
    <property type="evidence" value="ECO:0007669"/>
    <property type="project" value="TreeGrafter"/>
</dbReference>
<dbReference type="GO" id="GO:0003677">
    <property type="term" value="F:DNA binding"/>
    <property type="evidence" value="ECO:0007669"/>
    <property type="project" value="UniProtKB-KW"/>
</dbReference>
<dbReference type="GO" id="GO:0003700">
    <property type="term" value="F:DNA-binding transcription factor activity"/>
    <property type="evidence" value="ECO:0007669"/>
    <property type="project" value="InterPro"/>
</dbReference>
<dbReference type="CDD" id="cd08435">
    <property type="entry name" value="PBP2_GbpR"/>
    <property type="match status" value="1"/>
</dbReference>
<dbReference type="FunFam" id="1.10.10.10:FF:000001">
    <property type="entry name" value="LysR family transcriptional regulator"/>
    <property type="match status" value="1"/>
</dbReference>
<dbReference type="Gene3D" id="3.40.190.290">
    <property type="match status" value="1"/>
</dbReference>
<dbReference type="Gene3D" id="1.10.10.10">
    <property type="entry name" value="Winged helix-like DNA-binding domain superfamily/Winged helix DNA-binding domain"/>
    <property type="match status" value="1"/>
</dbReference>
<dbReference type="InterPro" id="IPR037405">
    <property type="entry name" value="GbpR_PBP2"/>
</dbReference>
<dbReference type="InterPro" id="IPR050950">
    <property type="entry name" value="HTH-type_LysR_regulators"/>
</dbReference>
<dbReference type="InterPro" id="IPR005119">
    <property type="entry name" value="LysR_subst-bd"/>
</dbReference>
<dbReference type="InterPro" id="IPR000847">
    <property type="entry name" value="Tscrpt_reg_HTH_LysR"/>
</dbReference>
<dbReference type="InterPro" id="IPR036388">
    <property type="entry name" value="WH-like_DNA-bd_sf"/>
</dbReference>
<dbReference type="InterPro" id="IPR036390">
    <property type="entry name" value="WH_DNA-bd_sf"/>
</dbReference>
<dbReference type="PANTHER" id="PTHR30419">
    <property type="entry name" value="HTH-TYPE TRANSCRIPTIONAL REGULATOR YBHD"/>
    <property type="match status" value="1"/>
</dbReference>
<dbReference type="PANTHER" id="PTHR30419:SF8">
    <property type="entry name" value="NITROGEN ASSIMILATION TRANSCRIPTIONAL ACTIVATOR-RELATED"/>
    <property type="match status" value="1"/>
</dbReference>
<dbReference type="Pfam" id="PF00126">
    <property type="entry name" value="HTH_1"/>
    <property type="match status" value="1"/>
</dbReference>
<dbReference type="Pfam" id="PF03466">
    <property type="entry name" value="LysR_substrate"/>
    <property type="match status" value="1"/>
</dbReference>
<dbReference type="PRINTS" id="PR00039">
    <property type="entry name" value="HTHLYSR"/>
</dbReference>
<dbReference type="SUPFAM" id="SSF53850">
    <property type="entry name" value="Periplasmic binding protein-like II"/>
    <property type="match status" value="1"/>
</dbReference>
<dbReference type="SUPFAM" id="SSF46785">
    <property type="entry name" value="Winged helix' DNA-binding domain"/>
    <property type="match status" value="1"/>
</dbReference>
<dbReference type="PROSITE" id="PS50931">
    <property type="entry name" value="HTH_LYSR"/>
    <property type="match status" value="1"/>
</dbReference>
<sequence>MTPHRFPANWFLKARLKLRHLQLFVALDEHRNLHRAAASLTMSQPAASKLLGDLEESLGVTLFERHGRGVEPNWYGGLMIRHARTILSGLQEAGEELNDLLAGHSGSVSIGTVMAPAVELVVPVITTLTRDHPDLKIAVAVETSDVLAERVRQGVMDFAIGRLPDHVDASCFDYQEISSEELCFVCRDGHPLLRLGRPLTAADLVDATWILQPLGSLLRSRVEALFRAEGVPPPRKVIESASPVISLAMVAENDSVTVFARALAQVFSPTGSCTIVPFHKRFSVEPYGIFWLKDRPLSPGARTALAALRAASDTKMRRALEMPQPSSSSDIEMCMDSANNRI</sequence>
<gene>
    <name type="primary">gbpR</name>
</gene>
<accession>P52661</accession>
<protein>
    <recommendedName>
        <fullName>HTH-type transcriptional regulator GbpR</fullName>
    </recommendedName>
    <alternativeName>
        <fullName>Galactose-binding protein regulator</fullName>
        <shortName>GBP regulator</shortName>
    </alternativeName>
</protein>
<proteinExistence type="evidence at protein level"/>
<organism>
    <name type="scientific">Azospirillum brasilense</name>
    <dbReference type="NCBI Taxonomy" id="192"/>
    <lineage>
        <taxon>Bacteria</taxon>
        <taxon>Pseudomonadati</taxon>
        <taxon>Pseudomonadota</taxon>
        <taxon>Alphaproteobacteria</taxon>
        <taxon>Rhodospirillales</taxon>
        <taxon>Azospirillaceae</taxon>
        <taxon>Azospirillum</taxon>
    </lineage>
</organism>